<accession>A5GQT7</accession>
<sequence>MTPSLANFLNSLVAGALIVVVPITIALILISQTDQVDRKL</sequence>
<organism>
    <name type="scientific">Synechococcus sp. (strain RCC307)</name>
    <dbReference type="NCBI Taxonomy" id="316278"/>
    <lineage>
        <taxon>Bacteria</taxon>
        <taxon>Bacillati</taxon>
        <taxon>Cyanobacteriota</taxon>
        <taxon>Cyanophyceae</taxon>
        <taxon>Synechococcales</taxon>
        <taxon>Synechococcaceae</taxon>
        <taxon>Synechococcus</taxon>
    </lineage>
</organism>
<feature type="chain" id="PRO_0000345383" description="Photosystem II reaction center protein X">
    <location>
        <begin position="1"/>
        <end position="40"/>
    </location>
</feature>
<feature type="transmembrane region" description="Helical" evidence="1">
    <location>
        <begin position="11"/>
        <end position="31"/>
    </location>
</feature>
<comment type="function">
    <text evidence="1">Involved in the binding and/or turnover of quinones at the Q(B) site of photosystem II (PSII). PSII is a light-driven water plastoquinone oxidoreductase, using light energy to abstract electrons from H(2)O, generating a proton gradient subsequently used for ATP formation.</text>
</comment>
<comment type="subunit">
    <text evidence="1">PSII is composed of 1 copy each of membrane proteins PsbA, PsbB, PsbC, PsbD, PsbE, PsbF, PsbH, PsbI, PsbJ, PsbK, PsbL, PsbM, PsbT, PsbX, PsbY, PsbZ, Psb30/Ycf12, peripheral proteins PsbO, CyanoQ (PsbQ), PsbU, PsbV and a large number of cofactors. It forms dimeric complexes.</text>
</comment>
<comment type="subcellular location">
    <subcellularLocation>
        <location evidence="1">Cellular thylakoid membrane</location>
        <topology evidence="1">Single-pass membrane protein</topology>
    </subcellularLocation>
</comment>
<comment type="similarity">
    <text evidence="1">Belongs to the PsbX family. Type 1 subfamily.</text>
</comment>
<keyword id="KW-0472">Membrane</keyword>
<keyword id="KW-0602">Photosynthesis</keyword>
<keyword id="KW-0604">Photosystem II</keyword>
<keyword id="KW-1185">Reference proteome</keyword>
<keyword id="KW-0793">Thylakoid</keyword>
<keyword id="KW-0812">Transmembrane</keyword>
<keyword id="KW-1133">Transmembrane helix</keyword>
<dbReference type="EMBL" id="CT978603">
    <property type="protein sequence ID" value="CAK27246.1"/>
    <property type="molecule type" value="Genomic_DNA"/>
</dbReference>
<dbReference type="SMR" id="A5GQT7"/>
<dbReference type="STRING" id="316278.SynRCC307_0343"/>
<dbReference type="KEGG" id="syr:SynRCC307_0343"/>
<dbReference type="eggNOG" id="ENOG502ZJI0">
    <property type="taxonomic scope" value="Bacteria"/>
</dbReference>
<dbReference type="HOGENOM" id="CLU_212837_1_0_3"/>
<dbReference type="OrthoDB" id="541645at2"/>
<dbReference type="Proteomes" id="UP000001115">
    <property type="component" value="Chromosome"/>
</dbReference>
<dbReference type="GO" id="GO:0009523">
    <property type="term" value="C:photosystem II"/>
    <property type="evidence" value="ECO:0007669"/>
    <property type="project" value="UniProtKB-KW"/>
</dbReference>
<dbReference type="GO" id="GO:0031676">
    <property type="term" value="C:plasma membrane-derived thylakoid membrane"/>
    <property type="evidence" value="ECO:0007669"/>
    <property type="project" value="UniProtKB-SubCell"/>
</dbReference>
<dbReference type="GO" id="GO:0015979">
    <property type="term" value="P:photosynthesis"/>
    <property type="evidence" value="ECO:0007669"/>
    <property type="project" value="UniProtKB-UniRule"/>
</dbReference>
<dbReference type="Gene3D" id="1.20.5.510">
    <property type="entry name" value="Single helix bin"/>
    <property type="match status" value="1"/>
</dbReference>
<dbReference type="HAMAP" id="MF_01386">
    <property type="entry name" value="PSII_PsbX_1"/>
    <property type="match status" value="1"/>
</dbReference>
<dbReference type="InterPro" id="IPR009518">
    <property type="entry name" value="PSII_PsbX"/>
</dbReference>
<dbReference type="InterPro" id="IPR023431">
    <property type="entry name" value="PSII_PsbX_type_1_subfam"/>
</dbReference>
<dbReference type="Pfam" id="PF06596">
    <property type="entry name" value="PsbX"/>
    <property type="match status" value="1"/>
</dbReference>
<protein>
    <recommendedName>
        <fullName evidence="1">Photosystem II reaction center protein X</fullName>
    </recommendedName>
</protein>
<gene>
    <name evidence="1" type="primary">psbX</name>
    <name type="ordered locus">SynRCC307_0343</name>
</gene>
<evidence type="ECO:0000255" key="1">
    <source>
        <dbReference type="HAMAP-Rule" id="MF_01386"/>
    </source>
</evidence>
<name>PSBX_SYNR3</name>
<reference key="1">
    <citation type="submission" date="2006-05" db="EMBL/GenBank/DDBJ databases">
        <authorList>
            <consortium name="Genoscope"/>
        </authorList>
    </citation>
    <scope>NUCLEOTIDE SEQUENCE [LARGE SCALE GENOMIC DNA]</scope>
    <source>
        <strain>RCC307</strain>
    </source>
</reference>
<proteinExistence type="inferred from homology"/>